<reference key="1">
    <citation type="journal article" date="2004" name="Nature">
        <title>Genome evolution in yeasts.</title>
        <authorList>
            <person name="Dujon B."/>
            <person name="Sherman D."/>
            <person name="Fischer G."/>
            <person name="Durrens P."/>
            <person name="Casaregola S."/>
            <person name="Lafontaine I."/>
            <person name="de Montigny J."/>
            <person name="Marck C."/>
            <person name="Neuveglise C."/>
            <person name="Talla E."/>
            <person name="Goffard N."/>
            <person name="Frangeul L."/>
            <person name="Aigle M."/>
            <person name="Anthouard V."/>
            <person name="Babour A."/>
            <person name="Barbe V."/>
            <person name="Barnay S."/>
            <person name="Blanchin S."/>
            <person name="Beckerich J.-M."/>
            <person name="Beyne E."/>
            <person name="Bleykasten C."/>
            <person name="Boisrame A."/>
            <person name="Boyer J."/>
            <person name="Cattolico L."/>
            <person name="Confanioleri F."/>
            <person name="de Daruvar A."/>
            <person name="Despons L."/>
            <person name="Fabre E."/>
            <person name="Fairhead C."/>
            <person name="Ferry-Dumazet H."/>
            <person name="Groppi A."/>
            <person name="Hantraye F."/>
            <person name="Hennequin C."/>
            <person name="Jauniaux N."/>
            <person name="Joyet P."/>
            <person name="Kachouri R."/>
            <person name="Kerrest A."/>
            <person name="Koszul R."/>
            <person name="Lemaire M."/>
            <person name="Lesur I."/>
            <person name="Ma L."/>
            <person name="Muller H."/>
            <person name="Nicaud J.-M."/>
            <person name="Nikolski M."/>
            <person name="Oztas S."/>
            <person name="Ozier-Kalogeropoulos O."/>
            <person name="Pellenz S."/>
            <person name="Potier S."/>
            <person name="Richard G.-F."/>
            <person name="Straub M.-L."/>
            <person name="Suleau A."/>
            <person name="Swennen D."/>
            <person name="Tekaia F."/>
            <person name="Wesolowski-Louvel M."/>
            <person name="Westhof E."/>
            <person name="Wirth B."/>
            <person name="Zeniou-Meyer M."/>
            <person name="Zivanovic Y."/>
            <person name="Bolotin-Fukuhara M."/>
            <person name="Thierry A."/>
            <person name="Bouchier C."/>
            <person name="Caudron B."/>
            <person name="Scarpelli C."/>
            <person name="Gaillardin C."/>
            <person name="Weissenbach J."/>
            <person name="Wincker P."/>
            <person name="Souciet J.-L."/>
        </authorList>
    </citation>
    <scope>NUCLEOTIDE SEQUENCE [LARGE SCALE GENOMIC DNA]</scope>
    <source>
        <strain>ATCC 36239 / CBS 767 / BCRC 21394 / JCM 1990 / NBRC 0083 / IGC 2968</strain>
    </source>
</reference>
<accession>Q6BI17</accession>
<gene>
    <name type="primary">CBP4</name>
    <name type="ordered locus">DEHA2G14124g</name>
</gene>
<proteinExistence type="inferred from homology"/>
<sequence>MSQKPLWYRWARVGVVGFSIIATGSLLFKYTVPTDEQLIAKFSPEIRAEYERNREIRQKEQQELMKIARETAASDDPIWKTGRIKSPFEKDGRNTDPKLVDIEKYNRERGDEFKKSEVERAQQELREAEELVSQKKGWFSRK</sequence>
<name>CBP4_DEBHA</name>
<organism>
    <name type="scientific">Debaryomyces hansenii (strain ATCC 36239 / CBS 767 / BCRC 21394 / JCM 1990 / NBRC 0083 / IGC 2968)</name>
    <name type="common">Yeast</name>
    <name type="synonym">Torulaspora hansenii</name>
    <dbReference type="NCBI Taxonomy" id="284592"/>
    <lineage>
        <taxon>Eukaryota</taxon>
        <taxon>Fungi</taxon>
        <taxon>Dikarya</taxon>
        <taxon>Ascomycota</taxon>
        <taxon>Saccharomycotina</taxon>
        <taxon>Pichiomycetes</taxon>
        <taxon>Debaryomycetaceae</taxon>
        <taxon>Debaryomyces</taxon>
    </lineage>
</organism>
<keyword id="KW-0143">Chaperone</keyword>
<keyword id="KW-0175">Coiled coil</keyword>
<keyword id="KW-0472">Membrane</keyword>
<keyword id="KW-0496">Mitochondrion</keyword>
<keyword id="KW-0999">Mitochondrion inner membrane</keyword>
<keyword id="KW-1185">Reference proteome</keyword>
<keyword id="KW-0812">Transmembrane</keyword>
<keyword id="KW-1133">Transmembrane helix</keyword>
<protein>
    <recommendedName>
        <fullName>Assembly factor CBP4</fullName>
    </recommendedName>
    <alternativeName>
        <fullName>Cytochrome b mRNA-processing protein 4</fullName>
    </alternativeName>
</protein>
<comment type="function">
    <text evidence="1">Essential for the assembly of ubiquinol-cytochrome c reductase. It has a direct effect on the correct occurrence of the Rieske protein, core 4, core 5 and apocytochrome b (By similarity).</text>
</comment>
<comment type="subcellular location">
    <subcellularLocation>
        <location evidence="1">Mitochondrion inner membrane</location>
        <topology evidence="1">Single-pass membrane protein</topology>
    </subcellularLocation>
</comment>
<comment type="similarity">
    <text evidence="4">Belongs to the CBP4 family.</text>
</comment>
<dbReference type="EMBL" id="CR382139">
    <property type="protein sequence ID" value="CAG90640.2"/>
    <property type="molecule type" value="Genomic_DNA"/>
</dbReference>
<dbReference type="RefSeq" id="XP_462154.2">
    <property type="nucleotide sequence ID" value="XM_462154.1"/>
</dbReference>
<dbReference type="FunCoup" id="Q6BI17">
    <property type="interactions" value="51"/>
</dbReference>
<dbReference type="STRING" id="284592.Q6BI17"/>
<dbReference type="GeneID" id="2905068"/>
<dbReference type="KEGG" id="dha:DEHA2G14124g"/>
<dbReference type="VEuPathDB" id="FungiDB:DEHA2G14124g"/>
<dbReference type="eggNOG" id="ENOG502S2G8">
    <property type="taxonomic scope" value="Eukaryota"/>
</dbReference>
<dbReference type="HOGENOM" id="CLU_147520_0_0_1"/>
<dbReference type="InParanoid" id="Q6BI17"/>
<dbReference type="OMA" id="YRWARVG"/>
<dbReference type="OrthoDB" id="5576752at2759"/>
<dbReference type="Proteomes" id="UP000000599">
    <property type="component" value="Chromosome G"/>
</dbReference>
<dbReference type="GO" id="GO:0005743">
    <property type="term" value="C:mitochondrial inner membrane"/>
    <property type="evidence" value="ECO:0007669"/>
    <property type="project" value="UniProtKB-SubCell"/>
</dbReference>
<dbReference type="GO" id="GO:0034551">
    <property type="term" value="P:mitochondrial respiratory chain complex III assembly"/>
    <property type="evidence" value="ECO:0007669"/>
    <property type="project" value="TreeGrafter"/>
</dbReference>
<dbReference type="InterPro" id="IPR012420">
    <property type="entry name" value="Cbp4"/>
</dbReference>
<dbReference type="PANTHER" id="PTHR28202">
    <property type="entry name" value="ASSEMBLY FACTOR CBP4"/>
    <property type="match status" value="1"/>
</dbReference>
<dbReference type="PANTHER" id="PTHR28202:SF1">
    <property type="entry name" value="ASSEMBLY FACTOR CBP4"/>
    <property type="match status" value="1"/>
</dbReference>
<dbReference type="Pfam" id="PF07960">
    <property type="entry name" value="CBP4"/>
    <property type="match status" value="1"/>
</dbReference>
<evidence type="ECO:0000250" key="1"/>
<evidence type="ECO:0000255" key="2"/>
<evidence type="ECO:0000256" key="3">
    <source>
        <dbReference type="SAM" id="MobiDB-lite"/>
    </source>
</evidence>
<evidence type="ECO:0000305" key="4"/>
<feature type="chain" id="PRO_0000330127" description="Assembly factor CBP4">
    <location>
        <begin position="1"/>
        <end position="142"/>
    </location>
</feature>
<feature type="transmembrane region" description="Helical" evidence="2">
    <location>
        <begin position="10"/>
        <end position="32"/>
    </location>
</feature>
<feature type="region of interest" description="Disordered" evidence="3">
    <location>
        <begin position="79"/>
        <end position="99"/>
    </location>
</feature>
<feature type="coiled-coil region" evidence="2">
    <location>
        <begin position="108"/>
        <end position="137"/>
    </location>
</feature>
<feature type="compositionally biased region" description="Basic and acidic residues" evidence="3">
    <location>
        <begin position="86"/>
        <end position="99"/>
    </location>
</feature>